<proteinExistence type="inferred from homology"/>
<keyword id="KW-0687">Ribonucleoprotein</keyword>
<keyword id="KW-0689">Ribosomal protein</keyword>
<feature type="chain" id="PRO_1000121837" description="Large ribosomal subunit protein uL29">
    <location>
        <begin position="1"/>
        <end position="63"/>
    </location>
</feature>
<protein>
    <recommendedName>
        <fullName evidence="1">Large ribosomal subunit protein uL29</fullName>
    </recommendedName>
    <alternativeName>
        <fullName evidence="2">50S ribosomal protein L29</fullName>
    </alternativeName>
</protein>
<reference key="1">
    <citation type="submission" date="2008-08" db="EMBL/GenBank/DDBJ databases">
        <title>Complete sequence of Vibrio fischeri strain MJ11.</title>
        <authorList>
            <person name="Mandel M.J."/>
            <person name="Stabb E.V."/>
            <person name="Ruby E.G."/>
            <person name="Ferriera S."/>
            <person name="Johnson J."/>
            <person name="Kravitz S."/>
            <person name="Beeson K."/>
            <person name="Sutton G."/>
            <person name="Rogers Y.-H."/>
            <person name="Friedman R."/>
            <person name="Frazier M."/>
            <person name="Venter J.C."/>
        </authorList>
    </citation>
    <scope>NUCLEOTIDE SEQUENCE [LARGE SCALE GENOMIC DNA]</scope>
    <source>
        <strain>MJ11</strain>
    </source>
</reference>
<evidence type="ECO:0000255" key="1">
    <source>
        <dbReference type="HAMAP-Rule" id="MF_00374"/>
    </source>
</evidence>
<evidence type="ECO:0000305" key="2"/>
<gene>
    <name evidence="1" type="primary">rpmC</name>
    <name type="ordered locus">VFMJ11_0233</name>
</gene>
<sequence>MKAQDLREKNVEELNEELLNLLREQFNLRMQAATGQLQQTHTLKAVRRDIARVKTLLNEKAGA</sequence>
<accession>B5FG17</accession>
<name>RL29_ALIFM</name>
<dbReference type="EMBL" id="CP001139">
    <property type="protein sequence ID" value="ACH64994.1"/>
    <property type="molecule type" value="Genomic_DNA"/>
</dbReference>
<dbReference type="RefSeq" id="WP_005417238.1">
    <property type="nucleotide sequence ID" value="NC_011184.1"/>
</dbReference>
<dbReference type="SMR" id="B5FG17"/>
<dbReference type="GeneID" id="56276447"/>
<dbReference type="KEGG" id="vfm:VFMJ11_0233"/>
<dbReference type="HOGENOM" id="CLU_158491_1_2_6"/>
<dbReference type="Proteomes" id="UP000001857">
    <property type="component" value="Chromosome I"/>
</dbReference>
<dbReference type="GO" id="GO:0022625">
    <property type="term" value="C:cytosolic large ribosomal subunit"/>
    <property type="evidence" value="ECO:0007669"/>
    <property type="project" value="TreeGrafter"/>
</dbReference>
<dbReference type="GO" id="GO:0003735">
    <property type="term" value="F:structural constituent of ribosome"/>
    <property type="evidence" value="ECO:0007669"/>
    <property type="project" value="InterPro"/>
</dbReference>
<dbReference type="GO" id="GO:0006412">
    <property type="term" value="P:translation"/>
    <property type="evidence" value="ECO:0007669"/>
    <property type="project" value="UniProtKB-UniRule"/>
</dbReference>
<dbReference type="CDD" id="cd00427">
    <property type="entry name" value="Ribosomal_L29_HIP"/>
    <property type="match status" value="1"/>
</dbReference>
<dbReference type="Gene3D" id="6.10.140.1970">
    <property type="match status" value="1"/>
</dbReference>
<dbReference type="HAMAP" id="MF_00374">
    <property type="entry name" value="Ribosomal_uL29"/>
    <property type="match status" value="1"/>
</dbReference>
<dbReference type="InterPro" id="IPR050063">
    <property type="entry name" value="Ribosomal_protein_uL29"/>
</dbReference>
<dbReference type="InterPro" id="IPR001854">
    <property type="entry name" value="Ribosomal_uL29"/>
</dbReference>
<dbReference type="InterPro" id="IPR018254">
    <property type="entry name" value="Ribosomal_uL29_CS"/>
</dbReference>
<dbReference type="InterPro" id="IPR036049">
    <property type="entry name" value="Ribosomal_uL29_sf"/>
</dbReference>
<dbReference type="NCBIfam" id="TIGR00012">
    <property type="entry name" value="L29"/>
    <property type="match status" value="1"/>
</dbReference>
<dbReference type="PANTHER" id="PTHR10916">
    <property type="entry name" value="60S RIBOSOMAL PROTEIN L35/50S RIBOSOMAL PROTEIN L29"/>
    <property type="match status" value="1"/>
</dbReference>
<dbReference type="PANTHER" id="PTHR10916:SF0">
    <property type="entry name" value="LARGE RIBOSOMAL SUBUNIT PROTEIN UL29C"/>
    <property type="match status" value="1"/>
</dbReference>
<dbReference type="Pfam" id="PF00831">
    <property type="entry name" value="Ribosomal_L29"/>
    <property type="match status" value="1"/>
</dbReference>
<dbReference type="SUPFAM" id="SSF46561">
    <property type="entry name" value="Ribosomal protein L29 (L29p)"/>
    <property type="match status" value="1"/>
</dbReference>
<dbReference type="PROSITE" id="PS00579">
    <property type="entry name" value="RIBOSOMAL_L29"/>
    <property type="match status" value="1"/>
</dbReference>
<comment type="similarity">
    <text evidence="1">Belongs to the universal ribosomal protein uL29 family.</text>
</comment>
<organism>
    <name type="scientific">Aliivibrio fischeri (strain MJ11)</name>
    <name type="common">Vibrio fischeri</name>
    <dbReference type="NCBI Taxonomy" id="388396"/>
    <lineage>
        <taxon>Bacteria</taxon>
        <taxon>Pseudomonadati</taxon>
        <taxon>Pseudomonadota</taxon>
        <taxon>Gammaproteobacteria</taxon>
        <taxon>Vibrionales</taxon>
        <taxon>Vibrionaceae</taxon>
        <taxon>Aliivibrio</taxon>
    </lineage>
</organism>